<keyword id="KW-0342">GTP-binding</keyword>
<keyword id="KW-0378">Hydrolase</keyword>
<keyword id="KW-0472">Membrane</keyword>
<keyword id="KW-0496">Mitochondrion</keyword>
<keyword id="KW-0999">Mitochondrion inner membrane</keyword>
<keyword id="KW-0547">Nucleotide-binding</keyword>
<keyword id="KW-0648">Protein biosynthesis</keyword>
<keyword id="KW-1185">Reference proteome</keyword>
<keyword id="KW-0809">Transit peptide</keyword>
<gene>
    <name type="primary">guf1</name>
    <name type="ORF">ATEG_03492</name>
</gene>
<sequence length="665" mass="74105">MRGCLQLARWLSAAPTRPAASHWPGLCAAPRFFSHSAILRASARTARAAASKPPSDLESRIAAIPIERYRNFCIVAHVDHGKSTLSDRLLELTGTIEPGTNKQVLDKLDVERERGITVKAQTCTMIYNHNGEDYLLHLVDTPGHVDFRAEVSRSYASCGGALLLVDASQGVQAQTVANFYLAFAQGLELIPVINKVDLPSAEPERALEQMKQSFELDTENAVMVSAKSGLNVEKLLPTVVDKIPAPIGDCKKPLRMLLVDSWYDSYKGVICLVRVFDGEIRAGDQLVSFATGIKYYVGEVGIMYPNETPQTVIRAGQVGYIFFNPGMKRSKEAKIGDTYTKVGSEKAVEPLPGFEEPKAMVFVAAYPVDADHFEHLEDSINQLMLNDRSITVQKESSEALGAGFRLGFLGTLHCSVFEDRLRQEHGASIIITPPSVPVKVLWKDGREEIVTSPAKFPDEDELRSKVAEIKEPYVLATLTFPDEYLGKVIELCESNRGVQQSLEYFTSTQVILKYELPMAQLVDDFFGKLKGSTKGYASLDYEESAWQTSNIVKLQLLVNKAPVDAVARIVHYSQIERLGRKWVTKFKEHVDRQLFEVVIQAAVGRKVIARETVKPYRKDVLAKLHASDVSRRRKLLEKQKEGRKRLRAVGNVVIEHKAFQAFLSK</sequence>
<proteinExistence type="inferred from homology"/>
<comment type="function">
    <text evidence="1">Promotes mitochondrial protein synthesis. May act as a fidelity factor of the translation reaction, by catalyzing a one-codon backward translocation of tRNAs on improperly translocated ribosomes. Binds to mitochondrial ribosomes in a GTP-dependent manner.</text>
</comment>
<comment type="catalytic activity">
    <reaction evidence="1">
        <text>GTP + H2O = GDP + phosphate + H(+)</text>
        <dbReference type="Rhea" id="RHEA:19669"/>
        <dbReference type="ChEBI" id="CHEBI:15377"/>
        <dbReference type="ChEBI" id="CHEBI:15378"/>
        <dbReference type="ChEBI" id="CHEBI:37565"/>
        <dbReference type="ChEBI" id="CHEBI:43474"/>
        <dbReference type="ChEBI" id="CHEBI:58189"/>
    </reaction>
</comment>
<comment type="subcellular location">
    <subcellularLocation>
        <location evidence="1">Mitochondrion inner membrane</location>
        <topology evidence="1">Peripheral membrane protein</topology>
        <orientation evidence="1">Matrix side</orientation>
    </subcellularLocation>
</comment>
<comment type="similarity">
    <text evidence="2">Belongs to the TRAFAC class translation factor GTPase superfamily. Classic translation factor GTPase family. LepA subfamily.</text>
</comment>
<reference key="1">
    <citation type="submission" date="2005-09" db="EMBL/GenBank/DDBJ databases">
        <title>Annotation of the Aspergillus terreus NIH2624 genome.</title>
        <authorList>
            <person name="Birren B.W."/>
            <person name="Lander E.S."/>
            <person name="Galagan J.E."/>
            <person name="Nusbaum C."/>
            <person name="Devon K."/>
            <person name="Henn M."/>
            <person name="Ma L.-J."/>
            <person name="Jaffe D.B."/>
            <person name="Butler J."/>
            <person name="Alvarez P."/>
            <person name="Gnerre S."/>
            <person name="Grabherr M."/>
            <person name="Kleber M."/>
            <person name="Mauceli E.W."/>
            <person name="Brockman W."/>
            <person name="Rounsley S."/>
            <person name="Young S.K."/>
            <person name="LaButti K."/>
            <person name="Pushparaj V."/>
            <person name="DeCaprio D."/>
            <person name="Crawford M."/>
            <person name="Koehrsen M."/>
            <person name="Engels R."/>
            <person name="Montgomery P."/>
            <person name="Pearson M."/>
            <person name="Howarth C."/>
            <person name="Larson L."/>
            <person name="Luoma S."/>
            <person name="White J."/>
            <person name="Alvarado L."/>
            <person name="Kodira C.D."/>
            <person name="Zeng Q."/>
            <person name="Oleary S."/>
            <person name="Yandava C."/>
            <person name="Denning D.W."/>
            <person name="Nierman W.C."/>
            <person name="Milne T."/>
            <person name="Madden K."/>
        </authorList>
    </citation>
    <scope>NUCLEOTIDE SEQUENCE [LARGE SCALE GENOMIC DNA]</scope>
    <source>
        <strain>NIH 2624 / FGSC A1156</strain>
    </source>
</reference>
<feature type="transit peptide" description="Mitochondrion" evidence="1">
    <location>
        <begin position="1"/>
        <end position="40"/>
    </location>
</feature>
<feature type="chain" id="PRO_0000402876" description="Translation factor guf1, mitochondrial">
    <location>
        <begin position="41"/>
        <end position="665"/>
    </location>
</feature>
<feature type="domain" description="tr-type G">
    <location>
        <begin position="67"/>
        <end position="247"/>
    </location>
</feature>
<feature type="binding site" evidence="1">
    <location>
        <begin position="76"/>
        <end position="83"/>
    </location>
    <ligand>
        <name>GTP</name>
        <dbReference type="ChEBI" id="CHEBI:37565"/>
    </ligand>
</feature>
<feature type="binding site" evidence="1">
    <location>
        <begin position="140"/>
        <end position="144"/>
    </location>
    <ligand>
        <name>GTP</name>
        <dbReference type="ChEBI" id="CHEBI:37565"/>
    </ligand>
</feature>
<feature type="binding site" evidence="1">
    <location>
        <begin position="194"/>
        <end position="197"/>
    </location>
    <ligand>
        <name>GTP</name>
        <dbReference type="ChEBI" id="CHEBI:37565"/>
    </ligand>
</feature>
<name>GUF1_ASPTN</name>
<organism>
    <name type="scientific">Aspergillus terreus (strain NIH 2624 / FGSC A1156)</name>
    <dbReference type="NCBI Taxonomy" id="341663"/>
    <lineage>
        <taxon>Eukaryota</taxon>
        <taxon>Fungi</taxon>
        <taxon>Dikarya</taxon>
        <taxon>Ascomycota</taxon>
        <taxon>Pezizomycotina</taxon>
        <taxon>Eurotiomycetes</taxon>
        <taxon>Eurotiomycetidae</taxon>
        <taxon>Eurotiales</taxon>
        <taxon>Aspergillaceae</taxon>
        <taxon>Aspergillus</taxon>
        <taxon>Aspergillus subgen. Circumdati</taxon>
    </lineage>
</organism>
<evidence type="ECO:0000255" key="1">
    <source>
        <dbReference type="HAMAP-Rule" id="MF_03137"/>
    </source>
</evidence>
<evidence type="ECO:0000305" key="2"/>
<accession>Q0CS42</accession>
<dbReference type="EC" id="3.6.5.-"/>
<dbReference type="EMBL" id="CH476597">
    <property type="protein sequence ID" value="EAU36766.1"/>
    <property type="molecule type" value="Genomic_DNA"/>
</dbReference>
<dbReference type="RefSeq" id="XP_001212670.1">
    <property type="nucleotide sequence ID" value="XM_001212670.1"/>
</dbReference>
<dbReference type="SMR" id="Q0CS42"/>
<dbReference type="STRING" id="341663.Q0CS42"/>
<dbReference type="EnsemblFungi" id="EAU36766">
    <property type="protein sequence ID" value="EAU36766"/>
    <property type="gene ID" value="ATEG_03492"/>
</dbReference>
<dbReference type="GeneID" id="4317685"/>
<dbReference type="VEuPathDB" id="FungiDB:ATEG_03492"/>
<dbReference type="eggNOG" id="KOG0462">
    <property type="taxonomic scope" value="Eukaryota"/>
</dbReference>
<dbReference type="HOGENOM" id="CLU_009995_3_1_1"/>
<dbReference type="OMA" id="QVKCDEN"/>
<dbReference type="OrthoDB" id="1074at2759"/>
<dbReference type="Proteomes" id="UP000007963">
    <property type="component" value="Unassembled WGS sequence"/>
</dbReference>
<dbReference type="GO" id="GO:0005743">
    <property type="term" value="C:mitochondrial inner membrane"/>
    <property type="evidence" value="ECO:0007669"/>
    <property type="project" value="UniProtKB-SubCell"/>
</dbReference>
<dbReference type="GO" id="GO:0005759">
    <property type="term" value="C:mitochondrial matrix"/>
    <property type="evidence" value="ECO:0007669"/>
    <property type="project" value="UniProtKB-UniRule"/>
</dbReference>
<dbReference type="GO" id="GO:0005525">
    <property type="term" value="F:GTP binding"/>
    <property type="evidence" value="ECO:0007669"/>
    <property type="project" value="UniProtKB-UniRule"/>
</dbReference>
<dbReference type="GO" id="GO:0003924">
    <property type="term" value="F:GTPase activity"/>
    <property type="evidence" value="ECO:0007669"/>
    <property type="project" value="UniProtKB-UniRule"/>
</dbReference>
<dbReference type="GO" id="GO:0097177">
    <property type="term" value="F:mitochondrial ribosome binding"/>
    <property type="evidence" value="ECO:0007669"/>
    <property type="project" value="EnsemblFungi"/>
</dbReference>
<dbReference type="GO" id="GO:0045727">
    <property type="term" value="P:positive regulation of translation"/>
    <property type="evidence" value="ECO:0007669"/>
    <property type="project" value="UniProtKB-UniRule"/>
</dbReference>
<dbReference type="GO" id="GO:0006412">
    <property type="term" value="P:translation"/>
    <property type="evidence" value="ECO:0007669"/>
    <property type="project" value="UniProtKB-KW"/>
</dbReference>
<dbReference type="CDD" id="cd03699">
    <property type="entry name" value="EF4_II"/>
    <property type="match status" value="1"/>
</dbReference>
<dbReference type="CDD" id="cd01890">
    <property type="entry name" value="LepA"/>
    <property type="match status" value="1"/>
</dbReference>
<dbReference type="CDD" id="cd03709">
    <property type="entry name" value="lepA_C"/>
    <property type="match status" value="1"/>
</dbReference>
<dbReference type="FunFam" id="3.40.50.300:FF:000078">
    <property type="entry name" value="Elongation factor 4"/>
    <property type="match status" value="1"/>
</dbReference>
<dbReference type="FunFam" id="2.40.30.10:FF:000015">
    <property type="entry name" value="Translation factor GUF1, mitochondrial"/>
    <property type="match status" value="1"/>
</dbReference>
<dbReference type="FunFam" id="3.30.70.240:FF:000007">
    <property type="entry name" value="Translation factor GUF1, mitochondrial"/>
    <property type="match status" value="1"/>
</dbReference>
<dbReference type="FunFam" id="3.30.70.2570:FF:000001">
    <property type="entry name" value="Translation factor GUF1, mitochondrial"/>
    <property type="match status" value="1"/>
</dbReference>
<dbReference type="FunFam" id="3.30.70.870:FF:000004">
    <property type="entry name" value="Translation factor GUF1, mitochondrial"/>
    <property type="match status" value="1"/>
</dbReference>
<dbReference type="Gene3D" id="3.30.70.240">
    <property type="match status" value="1"/>
</dbReference>
<dbReference type="Gene3D" id="3.30.70.2570">
    <property type="entry name" value="Elongation factor 4, C-terminal domain"/>
    <property type="match status" value="1"/>
</dbReference>
<dbReference type="Gene3D" id="3.30.70.870">
    <property type="entry name" value="Elongation Factor G (Translational Gtpase), domain 3"/>
    <property type="match status" value="1"/>
</dbReference>
<dbReference type="Gene3D" id="3.40.50.300">
    <property type="entry name" value="P-loop containing nucleotide triphosphate hydrolases"/>
    <property type="match status" value="1"/>
</dbReference>
<dbReference type="Gene3D" id="2.40.30.10">
    <property type="entry name" value="Translation factors"/>
    <property type="match status" value="1"/>
</dbReference>
<dbReference type="HAMAP" id="MF_00071">
    <property type="entry name" value="LepA"/>
    <property type="match status" value="1"/>
</dbReference>
<dbReference type="InterPro" id="IPR006297">
    <property type="entry name" value="EF-4"/>
</dbReference>
<dbReference type="InterPro" id="IPR035647">
    <property type="entry name" value="EFG_III/V"/>
</dbReference>
<dbReference type="InterPro" id="IPR000640">
    <property type="entry name" value="EFG_V-like"/>
</dbReference>
<dbReference type="InterPro" id="IPR031157">
    <property type="entry name" value="G_TR_CS"/>
</dbReference>
<dbReference type="InterPro" id="IPR038363">
    <property type="entry name" value="LepA_C_sf"/>
</dbReference>
<dbReference type="InterPro" id="IPR013842">
    <property type="entry name" value="LepA_CTD"/>
</dbReference>
<dbReference type="InterPro" id="IPR035654">
    <property type="entry name" value="LepA_IV"/>
</dbReference>
<dbReference type="InterPro" id="IPR027417">
    <property type="entry name" value="P-loop_NTPase"/>
</dbReference>
<dbReference type="InterPro" id="IPR005225">
    <property type="entry name" value="Small_GTP-bd"/>
</dbReference>
<dbReference type="InterPro" id="IPR000795">
    <property type="entry name" value="T_Tr_GTP-bd_dom"/>
</dbReference>
<dbReference type="InterPro" id="IPR009000">
    <property type="entry name" value="Transl_B-barrel_sf"/>
</dbReference>
<dbReference type="NCBIfam" id="TIGR01393">
    <property type="entry name" value="lepA"/>
    <property type="match status" value="1"/>
</dbReference>
<dbReference type="NCBIfam" id="TIGR00231">
    <property type="entry name" value="small_GTP"/>
    <property type="match status" value="1"/>
</dbReference>
<dbReference type="PANTHER" id="PTHR43512:SF7">
    <property type="entry name" value="TRANSLATION FACTOR GUF1, MITOCHONDRIAL"/>
    <property type="match status" value="1"/>
</dbReference>
<dbReference type="PANTHER" id="PTHR43512">
    <property type="entry name" value="TRANSLATION FACTOR GUF1-RELATED"/>
    <property type="match status" value="1"/>
</dbReference>
<dbReference type="Pfam" id="PF00679">
    <property type="entry name" value="EFG_C"/>
    <property type="match status" value="1"/>
</dbReference>
<dbReference type="Pfam" id="PF00009">
    <property type="entry name" value="GTP_EFTU"/>
    <property type="match status" value="1"/>
</dbReference>
<dbReference type="Pfam" id="PF06421">
    <property type="entry name" value="LepA_C"/>
    <property type="match status" value="1"/>
</dbReference>
<dbReference type="PRINTS" id="PR00315">
    <property type="entry name" value="ELONGATNFCT"/>
</dbReference>
<dbReference type="SUPFAM" id="SSF54980">
    <property type="entry name" value="EF-G C-terminal domain-like"/>
    <property type="match status" value="2"/>
</dbReference>
<dbReference type="SUPFAM" id="SSF52540">
    <property type="entry name" value="P-loop containing nucleoside triphosphate hydrolases"/>
    <property type="match status" value="1"/>
</dbReference>
<dbReference type="SUPFAM" id="SSF50447">
    <property type="entry name" value="Translation proteins"/>
    <property type="match status" value="1"/>
</dbReference>
<dbReference type="PROSITE" id="PS00301">
    <property type="entry name" value="G_TR_1"/>
    <property type="match status" value="1"/>
</dbReference>
<dbReference type="PROSITE" id="PS51722">
    <property type="entry name" value="G_TR_2"/>
    <property type="match status" value="1"/>
</dbReference>
<protein>
    <recommendedName>
        <fullName evidence="1">Translation factor guf1, mitochondrial</fullName>
        <ecNumber>3.6.5.-</ecNumber>
    </recommendedName>
    <alternativeName>
        <fullName evidence="1">Elongation factor 4 homolog</fullName>
        <shortName evidence="1">EF-4</shortName>
    </alternativeName>
    <alternativeName>
        <fullName evidence="1">GTPase guf1</fullName>
    </alternativeName>
    <alternativeName>
        <fullName evidence="1">Ribosomal back-translocase</fullName>
    </alternativeName>
</protein>